<organism>
    <name type="scientific">Acholeplasma phage L2</name>
    <name type="common">Bacteriophage L2</name>
    <dbReference type="NCBI Taxonomy" id="46014"/>
    <lineage>
        <taxon>Viruses</taxon>
        <taxon>Viruses incertae sedis</taxon>
        <taxon>Plasmaviridae</taxon>
        <taxon>Plasmavirus</taxon>
    </lineage>
</organism>
<proteinExistence type="predicted"/>
<dbReference type="EMBL" id="L13696">
    <property type="protein sequence ID" value="AAA87966.1"/>
    <property type="molecule type" value="Genomic_DNA"/>
</dbReference>
<dbReference type="RefSeq" id="NP_040818.1">
    <property type="nucleotide sequence ID" value="NC_001447.1"/>
</dbReference>
<dbReference type="SMR" id="P42545"/>
<dbReference type="GeneID" id="1261012"/>
<dbReference type="KEGG" id="vg:1261012"/>
<dbReference type="Proteomes" id="UP000001573">
    <property type="component" value="Genome"/>
</dbReference>
<reference key="1">
    <citation type="journal article" date="1994" name="Gene">
        <title>Sequence analysis of a unique temperature phage: mycoplasma virus L2.</title>
        <authorList>
            <person name="Maniloff J."/>
            <person name="Kampo G.J."/>
            <person name="Dascher C.C."/>
        </authorList>
    </citation>
    <scope>NUCLEOTIDE SEQUENCE [LARGE SCALE GENOMIC DNA]</scope>
</reference>
<sequence>MKIKRSEILEQITWQDMMQLLLPEEQIPLMEKDIAKFMSYNHKVPQSVLTAVLMKAIITAKRTHGANTLINEAYLNITFKSFVMDKKKERIIIRTASQAAAKLDKEISDLKQNKIVKPVVTNPDWVDEVMNELVEAFEAQ</sequence>
<protein>
    <recommendedName>
        <fullName>Uncharacterized 16.1 kDa protein</fullName>
    </recommendedName>
    <alternativeName>
        <fullName>ORF10</fullName>
    </alternativeName>
</protein>
<organismHost>
    <name type="scientific">Mycoplasma</name>
    <dbReference type="NCBI Taxonomy" id="2093"/>
</organismHost>
<name>YO10_BPL2</name>
<accession>P42545</accession>
<keyword id="KW-1185">Reference proteome</keyword>
<feature type="chain" id="PRO_0000066356" description="Uncharacterized 16.1 kDa protein">
    <location>
        <begin position="1"/>
        <end position="140"/>
    </location>
</feature>